<reference key="1">
    <citation type="journal article" date="2007" name="Proc. Natl. Acad. Sci. U.S.A.">
        <title>Genomic and metabolic adaptations of Methanobrevibacter smithii to the human gut.</title>
        <authorList>
            <person name="Samuel B.S."/>
            <person name="Hansen E.E."/>
            <person name="Manchester J.K."/>
            <person name="Coutinho P.M."/>
            <person name="Henrissat B."/>
            <person name="Fulton R."/>
            <person name="Latreille P."/>
            <person name="Kim K."/>
            <person name="Wilson R.K."/>
            <person name="Gordon J.I."/>
        </authorList>
    </citation>
    <scope>NUCLEOTIDE SEQUENCE [LARGE SCALE GENOMIC DNA]</scope>
    <source>
        <strain>ATCC 35061 / DSM 861 / OCM 144 / PS</strain>
    </source>
</reference>
<organism>
    <name type="scientific">Methanobrevibacter smithii (strain ATCC 35061 / DSM 861 / OCM 144 / PS)</name>
    <dbReference type="NCBI Taxonomy" id="420247"/>
    <lineage>
        <taxon>Archaea</taxon>
        <taxon>Methanobacteriati</taxon>
        <taxon>Methanobacteriota</taxon>
        <taxon>Methanomada group</taxon>
        <taxon>Methanobacteria</taxon>
        <taxon>Methanobacteriales</taxon>
        <taxon>Methanobacteriaceae</taxon>
        <taxon>Methanobrevibacter</taxon>
    </lineage>
</organism>
<protein>
    <recommendedName>
        <fullName evidence="1">Prefoldin subunit beta</fullName>
    </recommendedName>
    <alternativeName>
        <fullName evidence="1">GimC subunit beta</fullName>
    </alternativeName>
</protein>
<gene>
    <name evidence="1" type="primary">pfdB</name>
    <name type="ordered locus">Msm_1634</name>
</gene>
<accession>A5UNR1</accession>
<proteinExistence type="inferred from homology"/>
<name>PFDB_METS3</name>
<dbReference type="EMBL" id="CP000678">
    <property type="protein sequence ID" value="ABQ87839.1"/>
    <property type="molecule type" value="Genomic_DNA"/>
</dbReference>
<dbReference type="RefSeq" id="WP_004033636.1">
    <property type="nucleotide sequence ID" value="NZ_CP117965.1"/>
</dbReference>
<dbReference type="SMR" id="A5UNR1"/>
<dbReference type="STRING" id="420247.Msm_1634"/>
<dbReference type="EnsemblBacteria" id="ABQ87839">
    <property type="protein sequence ID" value="ABQ87839"/>
    <property type="gene ID" value="Msm_1634"/>
</dbReference>
<dbReference type="KEGG" id="msi:Msm_1634"/>
<dbReference type="PATRIC" id="fig|420247.28.peg.1624"/>
<dbReference type="eggNOG" id="arCOG01342">
    <property type="taxonomic scope" value="Archaea"/>
</dbReference>
<dbReference type="HOGENOM" id="CLU_131909_0_1_2"/>
<dbReference type="Proteomes" id="UP000001992">
    <property type="component" value="Chromosome"/>
</dbReference>
<dbReference type="GO" id="GO:0005737">
    <property type="term" value="C:cytoplasm"/>
    <property type="evidence" value="ECO:0007669"/>
    <property type="project" value="UniProtKB-SubCell"/>
</dbReference>
<dbReference type="GO" id="GO:0016272">
    <property type="term" value="C:prefoldin complex"/>
    <property type="evidence" value="ECO:0007669"/>
    <property type="project" value="UniProtKB-UniRule"/>
</dbReference>
<dbReference type="GO" id="GO:0051087">
    <property type="term" value="F:protein-folding chaperone binding"/>
    <property type="evidence" value="ECO:0007669"/>
    <property type="project" value="TreeGrafter"/>
</dbReference>
<dbReference type="GO" id="GO:0051082">
    <property type="term" value="F:unfolded protein binding"/>
    <property type="evidence" value="ECO:0007669"/>
    <property type="project" value="UniProtKB-UniRule"/>
</dbReference>
<dbReference type="GO" id="GO:0051131">
    <property type="term" value="P:chaperone-mediated protein complex assembly"/>
    <property type="evidence" value="ECO:0007669"/>
    <property type="project" value="TreeGrafter"/>
</dbReference>
<dbReference type="GO" id="GO:0006457">
    <property type="term" value="P:protein folding"/>
    <property type="evidence" value="ECO:0007669"/>
    <property type="project" value="UniProtKB-UniRule"/>
</dbReference>
<dbReference type="CDD" id="cd23162">
    <property type="entry name" value="Prefoldin_beta_GimC"/>
    <property type="match status" value="1"/>
</dbReference>
<dbReference type="Gene3D" id="1.10.287.370">
    <property type="match status" value="1"/>
</dbReference>
<dbReference type="HAMAP" id="MF_00307">
    <property type="entry name" value="PfdB"/>
    <property type="match status" value="1"/>
</dbReference>
<dbReference type="InterPro" id="IPR002777">
    <property type="entry name" value="PFD_beta-like"/>
</dbReference>
<dbReference type="InterPro" id="IPR012713">
    <property type="entry name" value="PfdB"/>
</dbReference>
<dbReference type="InterPro" id="IPR009053">
    <property type="entry name" value="Prefoldin"/>
</dbReference>
<dbReference type="NCBIfam" id="TIGR02338">
    <property type="entry name" value="gimC_beta"/>
    <property type="match status" value="1"/>
</dbReference>
<dbReference type="PANTHER" id="PTHR21431">
    <property type="entry name" value="PREFOLDIN SUBUNIT 6"/>
    <property type="match status" value="1"/>
</dbReference>
<dbReference type="PANTHER" id="PTHR21431:SF0">
    <property type="entry name" value="PREFOLDIN SUBUNIT 6"/>
    <property type="match status" value="1"/>
</dbReference>
<dbReference type="Pfam" id="PF01920">
    <property type="entry name" value="Prefoldin_2"/>
    <property type="match status" value="1"/>
</dbReference>
<dbReference type="SUPFAM" id="SSF46579">
    <property type="entry name" value="Prefoldin"/>
    <property type="match status" value="1"/>
</dbReference>
<sequence length="116" mass="13459">MEIPENIQHQLNQFQQLQQQAQAVTMQIQNVEVQIQESETALEELNKTDENAEVFKQAGNLLIKVDYAQAVEDMNEKLETLKLRKQTMARQEERVMKKLEEMQTNIQAAMQGLQGE</sequence>
<keyword id="KW-0143">Chaperone</keyword>
<keyword id="KW-0963">Cytoplasm</keyword>
<evidence type="ECO:0000255" key="1">
    <source>
        <dbReference type="HAMAP-Rule" id="MF_00307"/>
    </source>
</evidence>
<comment type="function">
    <text evidence="1">Molecular chaperone capable of stabilizing a range of proteins. Seems to fulfill an ATP-independent, HSP70-like function in archaeal de novo protein folding.</text>
</comment>
<comment type="subunit">
    <text evidence="1">Heterohexamer of two alpha and four beta subunits.</text>
</comment>
<comment type="subcellular location">
    <subcellularLocation>
        <location evidence="1">Cytoplasm</location>
    </subcellularLocation>
</comment>
<comment type="similarity">
    <text evidence="1">Belongs to the prefoldin subunit beta family.</text>
</comment>
<feature type="chain" id="PRO_1000022795" description="Prefoldin subunit beta">
    <location>
        <begin position="1"/>
        <end position="116"/>
    </location>
</feature>